<dbReference type="EC" id="2.7.11.1"/>
<dbReference type="EMBL" id="CU329671">
    <property type="protein sequence ID" value="CAA17922.1"/>
    <property type="molecule type" value="Genomic_DNA"/>
</dbReference>
<dbReference type="PIR" id="T39305">
    <property type="entry name" value="T39305"/>
</dbReference>
<dbReference type="RefSeq" id="NP_595288.1">
    <property type="nucleotide sequence ID" value="NM_001021195.2"/>
</dbReference>
<dbReference type="SMR" id="O42900"/>
<dbReference type="BioGRID" id="276540">
    <property type="interactions" value="8"/>
</dbReference>
<dbReference type="ComplexPortal" id="CPX-25763">
    <property type="entry name" value="Phosphatidylinositol 3-kinase complex, class III, type I"/>
</dbReference>
<dbReference type="ComplexPortal" id="CPX-25772">
    <property type="entry name" value="Phosphatidylinositol 3-kinase complex, class III, type II"/>
</dbReference>
<dbReference type="FunCoup" id="O42900">
    <property type="interactions" value="400"/>
</dbReference>
<dbReference type="STRING" id="284812.O42900"/>
<dbReference type="iPTMnet" id="O42900"/>
<dbReference type="PaxDb" id="4896-SPBC119.07.1"/>
<dbReference type="EnsemblFungi" id="SPBC119.07.1">
    <property type="protein sequence ID" value="SPBC119.07.1:pep"/>
    <property type="gene ID" value="SPBC119.07"/>
</dbReference>
<dbReference type="GeneID" id="2539996"/>
<dbReference type="KEGG" id="spo:2539996"/>
<dbReference type="PomBase" id="SPBC119.07">
    <property type="gene designation" value="vps15"/>
</dbReference>
<dbReference type="VEuPathDB" id="FungiDB:SPBC119.07"/>
<dbReference type="eggNOG" id="KOG1240">
    <property type="taxonomic scope" value="Eukaryota"/>
</dbReference>
<dbReference type="HOGENOM" id="CLU_001696_0_1_1"/>
<dbReference type="InParanoid" id="O42900"/>
<dbReference type="OMA" id="YNLLCSW"/>
<dbReference type="PhylomeDB" id="O42900"/>
<dbReference type="Reactome" id="R-SPO-1632852">
    <property type="pathway name" value="Macroautophagy"/>
</dbReference>
<dbReference type="Reactome" id="R-SPO-1660514">
    <property type="pathway name" value="Synthesis of PIPs at the Golgi membrane"/>
</dbReference>
<dbReference type="Reactome" id="R-SPO-1660516">
    <property type="pathway name" value="Synthesis of PIPs at the early endosome membrane"/>
</dbReference>
<dbReference type="Reactome" id="R-SPO-1660517">
    <property type="pathway name" value="Synthesis of PIPs at the late endosome membrane"/>
</dbReference>
<dbReference type="Reactome" id="R-SPO-5668599">
    <property type="pathway name" value="RHO GTPases Activate NADPH Oxidases"/>
</dbReference>
<dbReference type="PRO" id="PR:O42900"/>
<dbReference type="Proteomes" id="UP000002485">
    <property type="component" value="Chromosome II"/>
</dbReference>
<dbReference type="GO" id="GO:0005829">
    <property type="term" value="C:cytosol"/>
    <property type="evidence" value="ECO:0007669"/>
    <property type="project" value="GOC"/>
</dbReference>
<dbReference type="GO" id="GO:0005770">
    <property type="term" value="C:late endosome"/>
    <property type="evidence" value="ECO:0000318"/>
    <property type="project" value="GO_Central"/>
</dbReference>
<dbReference type="GO" id="GO:0071561">
    <property type="term" value="C:nucleus-vacuole junction"/>
    <property type="evidence" value="ECO:0000318"/>
    <property type="project" value="GO_Central"/>
</dbReference>
<dbReference type="GO" id="GO:0034271">
    <property type="term" value="C:phosphatidylinositol 3-kinase complex, class III, type I"/>
    <property type="evidence" value="ECO:0000314"/>
    <property type="project" value="PomBase"/>
</dbReference>
<dbReference type="GO" id="GO:0034272">
    <property type="term" value="C:phosphatidylinositol 3-kinase complex, class III, type II"/>
    <property type="evidence" value="ECO:0000314"/>
    <property type="project" value="PomBase"/>
</dbReference>
<dbReference type="GO" id="GO:0005524">
    <property type="term" value="F:ATP binding"/>
    <property type="evidence" value="ECO:0007669"/>
    <property type="project" value="UniProtKB-KW"/>
</dbReference>
<dbReference type="GO" id="GO:0106310">
    <property type="term" value="F:protein serine kinase activity"/>
    <property type="evidence" value="ECO:0007669"/>
    <property type="project" value="RHEA"/>
</dbReference>
<dbReference type="GO" id="GO:0004674">
    <property type="term" value="F:protein serine/threonine kinase activity"/>
    <property type="evidence" value="ECO:0000318"/>
    <property type="project" value="GO_Central"/>
</dbReference>
<dbReference type="GO" id="GO:0045324">
    <property type="term" value="P:late endosome to vacuole transport"/>
    <property type="evidence" value="ECO:0000318"/>
    <property type="project" value="GO_Central"/>
</dbReference>
<dbReference type="GO" id="GO:0016236">
    <property type="term" value="P:macroautophagy"/>
    <property type="evidence" value="ECO:0000315"/>
    <property type="project" value="PomBase"/>
</dbReference>
<dbReference type="GO" id="GO:0000425">
    <property type="term" value="P:pexophagy"/>
    <property type="evidence" value="ECO:0000318"/>
    <property type="project" value="GO_Central"/>
</dbReference>
<dbReference type="GO" id="GO:0006623">
    <property type="term" value="P:protein targeting to vacuole"/>
    <property type="evidence" value="ECO:0000318"/>
    <property type="project" value="GO_Central"/>
</dbReference>
<dbReference type="GO" id="GO:0042147">
    <property type="term" value="P:retrograde transport, endosome to Golgi"/>
    <property type="evidence" value="ECO:0000266"/>
    <property type="project" value="PomBase"/>
</dbReference>
<dbReference type="GO" id="GO:0023052">
    <property type="term" value="P:signaling"/>
    <property type="evidence" value="ECO:0000303"/>
    <property type="project" value="PomBase"/>
</dbReference>
<dbReference type="CDD" id="cd13980">
    <property type="entry name" value="STKc_Vps15"/>
    <property type="match status" value="1"/>
</dbReference>
<dbReference type="FunFam" id="1.10.510.10:FF:000497">
    <property type="entry name" value="Phosphoinositide 3-kinase regulatory subunit"/>
    <property type="match status" value="1"/>
</dbReference>
<dbReference type="Gene3D" id="1.25.10.10">
    <property type="entry name" value="Leucine-rich Repeat Variant"/>
    <property type="match status" value="2"/>
</dbReference>
<dbReference type="Gene3D" id="1.10.510.10">
    <property type="entry name" value="Transferase(Phosphotransferase) domain 1"/>
    <property type="match status" value="1"/>
</dbReference>
<dbReference type="Gene3D" id="2.130.10.10">
    <property type="entry name" value="YVTN repeat-like/Quinoprotein amine dehydrogenase"/>
    <property type="match status" value="1"/>
</dbReference>
<dbReference type="InterPro" id="IPR011989">
    <property type="entry name" value="ARM-like"/>
</dbReference>
<dbReference type="InterPro" id="IPR016024">
    <property type="entry name" value="ARM-type_fold"/>
</dbReference>
<dbReference type="InterPro" id="IPR021133">
    <property type="entry name" value="HEAT_type_2"/>
</dbReference>
<dbReference type="InterPro" id="IPR011009">
    <property type="entry name" value="Kinase-like_dom_sf"/>
</dbReference>
<dbReference type="InterPro" id="IPR000719">
    <property type="entry name" value="Prot_kinase_dom"/>
</dbReference>
<dbReference type="InterPro" id="IPR008271">
    <property type="entry name" value="Ser/Thr_kinase_AS"/>
</dbReference>
<dbReference type="InterPro" id="IPR045162">
    <property type="entry name" value="Vps15-like"/>
</dbReference>
<dbReference type="InterPro" id="IPR055231">
    <property type="entry name" value="VPS15-like_hel"/>
</dbReference>
<dbReference type="InterPro" id="IPR015943">
    <property type="entry name" value="WD40/YVTN_repeat-like_dom_sf"/>
</dbReference>
<dbReference type="InterPro" id="IPR036322">
    <property type="entry name" value="WD40_repeat_dom_sf"/>
</dbReference>
<dbReference type="PANTHER" id="PTHR17583">
    <property type="entry name" value="PHOSPHOINOSITIDE 3-KINASE REGULATORY SUBUNIT 4"/>
    <property type="match status" value="1"/>
</dbReference>
<dbReference type="PANTHER" id="PTHR17583:SF0">
    <property type="entry name" value="PHOSPHOINOSITIDE 3-KINASE REGULATORY SUBUNIT 4"/>
    <property type="match status" value="1"/>
</dbReference>
<dbReference type="Pfam" id="PF00069">
    <property type="entry name" value="Pkinase"/>
    <property type="match status" value="1"/>
</dbReference>
<dbReference type="Pfam" id="PF22956">
    <property type="entry name" value="VPS15-like_hel"/>
    <property type="match status" value="1"/>
</dbReference>
<dbReference type="SMART" id="SM00220">
    <property type="entry name" value="S_TKc"/>
    <property type="match status" value="1"/>
</dbReference>
<dbReference type="SUPFAM" id="SSF48371">
    <property type="entry name" value="ARM repeat"/>
    <property type="match status" value="1"/>
</dbReference>
<dbReference type="SUPFAM" id="SSF56112">
    <property type="entry name" value="Protein kinase-like (PK-like)"/>
    <property type="match status" value="1"/>
</dbReference>
<dbReference type="SUPFAM" id="SSF50978">
    <property type="entry name" value="WD40 repeat-like"/>
    <property type="match status" value="1"/>
</dbReference>
<dbReference type="PROSITE" id="PS50077">
    <property type="entry name" value="HEAT_REPEAT"/>
    <property type="match status" value="1"/>
</dbReference>
<dbReference type="PROSITE" id="PS50011">
    <property type="entry name" value="PROTEIN_KINASE_DOM"/>
    <property type="match status" value="1"/>
</dbReference>
<dbReference type="PROSITE" id="PS00108">
    <property type="entry name" value="PROTEIN_KINASE_ST"/>
    <property type="match status" value="1"/>
</dbReference>
<feature type="chain" id="PRO_0000256820" description="Serine/threonine-protein kinase vps15">
    <location>
        <begin position="1"/>
        <end position="1706"/>
    </location>
</feature>
<feature type="domain" description="Protein kinase" evidence="2">
    <location>
        <begin position="24"/>
        <end position="293"/>
    </location>
</feature>
<feature type="repeat" description="HEAT 1">
    <location>
        <begin position="56"/>
        <end position="94"/>
    </location>
</feature>
<feature type="repeat" description="HEAT 2">
    <location>
        <begin position="426"/>
        <end position="465"/>
    </location>
</feature>
<feature type="repeat" description="HEAT 3">
    <location>
        <begin position="466"/>
        <end position="504"/>
    </location>
</feature>
<feature type="repeat" description="HEAT 4">
    <location>
        <begin position="511"/>
        <end position="549"/>
    </location>
</feature>
<feature type="repeat" description="HEAT 5">
    <location>
        <begin position="587"/>
        <end position="625"/>
    </location>
</feature>
<feature type="repeat" description="HEAT 6">
    <location>
        <begin position="626"/>
        <end position="664"/>
    </location>
</feature>
<feature type="repeat" description="HEAT 7">
    <location>
        <begin position="665"/>
        <end position="703"/>
    </location>
</feature>
<feature type="repeat" description="HEAT 8">
    <location>
        <begin position="705"/>
        <end position="743"/>
    </location>
</feature>
<feature type="repeat" description="WD 1">
    <location>
        <begin position="1213"/>
        <end position="1252"/>
    </location>
</feature>
<feature type="repeat" description="WD 2">
    <location>
        <begin position="1368"/>
        <end position="1407"/>
    </location>
</feature>
<feature type="repeat" description="WD 3">
    <location>
        <begin position="1577"/>
        <end position="1622"/>
    </location>
</feature>
<feature type="region of interest" description="Disordered" evidence="4">
    <location>
        <begin position="982"/>
        <end position="1099"/>
    </location>
</feature>
<feature type="region of interest" description="Disordered" evidence="4">
    <location>
        <begin position="1431"/>
        <end position="1461"/>
    </location>
</feature>
<feature type="compositionally biased region" description="Basic and acidic residues" evidence="4">
    <location>
        <begin position="984"/>
        <end position="1002"/>
    </location>
</feature>
<feature type="compositionally biased region" description="Basic and acidic residues" evidence="4">
    <location>
        <begin position="1014"/>
        <end position="1023"/>
    </location>
</feature>
<feature type="compositionally biased region" description="Polar residues" evidence="4">
    <location>
        <begin position="1029"/>
        <end position="1055"/>
    </location>
</feature>
<feature type="compositionally biased region" description="Low complexity" evidence="4">
    <location>
        <begin position="1056"/>
        <end position="1069"/>
    </location>
</feature>
<feature type="compositionally biased region" description="Basic and acidic residues" evidence="4">
    <location>
        <begin position="1079"/>
        <end position="1090"/>
    </location>
</feature>
<feature type="compositionally biased region" description="Polar residues" evidence="4">
    <location>
        <begin position="1431"/>
        <end position="1442"/>
    </location>
</feature>
<feature type="active site" description="Proton acceptor" evidence="2 3">
    <location>
        <position position="146"/>
    </location>
</feature>
<feature type="binding site" evidence="2">
    <location>
        <begin position="30"/>
        <end position="38"/>
    </location>
    <ligand>
        <name>ATP</name>
        <dbReference type="ChEBI" id="CHEBI:30616"/>
    </ligand>
</feature>
<feature type="binding site" evidence="2">
    <location>
        <position position="52"/>
    </location>
    <ligand>
        <name>ATP</name>
        <dbReference type="ChEBI" id="CHEBI:30616"/>
    </ligand>
</feature>
<feature type="modified residue" description="Phosphoserine" evidence="5">
    <location>
        <position position="957"/>
    </location>
</feature>
<feature type="modified residue" description="Phosphotyrosine" evidence="5">
    <location>
        <position position="958"/>
    </location>
</feature>
<protein>
    <recommendedName>
        <fullName>Serine/threonine-protein kinase vps15</fullName>
        <ecNumber>2.7.11.1</ecNumber>
    </recommendedName>
</protein>
<keyword id="KW-0067">ATP-binding</keyword>
<keyword id="KW-0072">Autophagy</keyword>
<keyword id="KW-0418">Kinase</keyword>
<keyword id="KW-0547">Nucleotide-binding</keyword>
<keyword id="KW-0597">Phosphoprotein</keyword>
<keyword id="KW-1185">Reference proteome</keyword>
<keyword id="KW-0677">Repeat</keyword>
<keyword id="KW-0723">Serine/threonine-protein kinase</keyword>
<keyword id="KW-0808">Transferase</keyword>
<keyword id="KW-0853">WD repeat</keyword>
<evidence type="ECO:0000250" key="1">
    <source>
        <dbReference type="UniProtKB" id="P22219"/>
    </source>
</evidence>
<evidence type="ECO:0000255" key="2">
    <source>
        <dbReference type="PROSITE-ProRule" id="PRU00159"/>
    </source>
</evidence>
<evidence type="ECO:0000255" key="3">
    <source>
        <dbReference type="PROSITE-ProRule" id="PRU10027"/>
    </source>
</evidence>
<evidence type="ECO:0000256" key="4">
    <source>
        <dbReference type="SAM" id="MobiDB-lite"/>
    </source>
</evidence>
<evidence type="ECO:0000269" key="5">
    <source>
    </source>
</evidence>
<evidence type="ECO:0000269" key="6">
    <source>
    </source>
</evidence>
<evidence type="ECO:0000312" key="7">
    <source>
        <dbReference type="PomBase" id="SPBC119.07"/>
    </source>
</evidence>
<name>VPS15_SCHPO</name>
<organism>
    <name type="scientific">Schizosaccharomyces pombe (strain 972 / ATCC 24843)</name>
    <name type="common">Fission yeast</name>
    <dbReference type="NCBI Taxonomy" id="284812"/>
    <lineage>
        <taxon>Eukaryota</taxon>
        <taxon>Fungi</taxon>
        <taxon>Dikarya</taxon>
        <taxon>Ascomycota</taxon>
        <taxon>Taphrinomycotina</taxon>
        <taxon>Schizosaccharomycetes</taxon>
        <taxon>Schizosaccharomycetales</taxon>
        <taxon>Schizosaccharomycetaceae</taxon>
        <taxon>Schizosaccharomyces</taxon>
    </lineage>
</organism>
<gene>
    <name evidence="7" type="primary">vps15</name>
    <name evidence="7" type="synonym">ppk19</name>
    <name type="ORF">SPBC119.07</name>
</gene>
<proteinExistence type="evidence at protein level"/>
<comment type="function">
    <text evidence="1 6">Functions as a part of the autophagy-specific VPS34 PI3-kinase complex I that plays a role in autophagosome assembly (PubMed:31941401). This complex is essential to recruit the atg8-phosphatidylinositol conjugate and the atg12-atg5 conjugate to the pre-autophagosomal structure (PubMed:31941401). Also functions as part of the VPS34 PI3-kinase complex II (By similarity).</text>
</comment>
<comment type="catalytic activity">
    <reaction>
        <text>L-seryl-[protein] + ATP = O-phospho-L-seryl-[protein] + ADP + H(+)</text>
        <dbReference type="Rhea" id="RHEA:17989"/>
        <dbReference type="Rhea" id="RHEA-COMP:9863"/>
        <dbReference type="Rhea" id="RHEA-COMP:11604"/>
        <dbReference type="ChEBI" id="CHEBI:15378"/>
        <dbReference type="ChEBI" id="CHEBI:29999"/>
        <dbReference type="ChEBI" id="CHEBI:30616"/>
        <dbReference type="ChEBI" id="CHEBI:83421"/>
        <dbReference type="ChEBI" id="CHEBI:456216"/>
        <dbReference type="EC" id="2.7.11.1"/>
    </reaction>
</comment>
<comment type="catalytic activity">
    <reaction>
        <text>L-threonyl-[protein] + ATP = O-phospho-L-threonyl-[protein] + ADP + H(+)</text>
        <dbReference type="Rhea" id="RHEA:46608"/>
        <dbReference type="Rhea" id="RHEA-COMP:11060"/>
        <dbReference type="Rhea" id="RHEA-COMP:11605"/>
        <dbReference type="ChEBI" id="CHEBI:15378"/>
        <dbReference type="ChEBI" id="CHEBI:30013"/>
        <dbReference type="ChEBI" id="CHEBI:30616"/>
        <dbReference type="ChEBI" id="CHEBI:61977"/>
        <dbReference type="ChEBI" id="CHEBI:456216"/>
        <dbReference type="EC" id="2.7.11.1"/>
    </reaction>
</comment>
<comment type="subunit">
    <text evidence="1 6">Component of the autophagy-specific vps34 PI3-kinase complex I composed of vps15, atg6, pik3/vps34, atg14 and atg38 (PubMed:31941401). Also a component of the vps34 PI3-kinase complex II composed of atg6, pik3, vps15 and vps38 (By similarity).</text>
</comment>
<comment type="similarity">
    <text evidence="2">Belongs to the protein kinase superfamily. Ser/Thr protein kinase family.</text>
</comment>
<accession>O42900</accession>
<reference key="1">
    <citation type="journal article" date="2002" name="Nature">
        <title>The genome sequence of Schizosaccharomyces pombe.</title>
        <authorList>
            <person name="Wood V."/>
            <person name="Gwilliam R."/>
            <person name="Rajandream M.A."/>
            <person name="Lyne M.H."/>
            <person name="Lyne R."/>
            <person name="Stewart A."/>
            <person name="Sgouros J.G."/>
            <person name="Peat N."/>
            <person name="Hayles J."/>
            <person name="Baker S.G."/>
            <person name="Basham D."/>
            <person name="Bowman S."/>
            <person name="Brooks K."/>
            <person name="Brown D."/>
            <person name="Brown S."/>
            <person name="Chillingworth T."/>
            <person name="Churcher C.M."/>
            <person name="Collins M."/>
            <person name="Connor R."/>
            <person name="Cronin A."/>
            <person name="Davis P."/>
            <person name="Feltwell T."/>
            <person name="Fraser A."/>
            <person name="Gentles S."/>
            <person name="Goble A."/>
            <person name="Hamlin N."/>
            <person name="Harris D.E."/>
            <person name="Hidalgo J."/>
            <person name="Hodgson G."/>
            <person name="Holroyd S."/>
            <person name="Hornsby T."/>
            <person name="Howarth S."/>
            <person name="Huckle E.J."/>
            <person name="Hunt S."/>
            <person name="Jagels K."/>
            <person name="James K.D."/>
            <person name="Jones L."/>
            <person name="Jones M."/>
            <person name="Leather S."/>
            <person name="McDonald S."/>
            <person name="McLean J."/>
            <person name="Mooney P."/>
            <person name="Moule S."/>
            <person name="Mungall K.L."/>
            <person name="Murphy L.D."/>
            <person name="Niblett D."/>
            <person name="Odell C."/>
            <person name="Oliver K."/>
            <person name="O'Neil S."/>
            <person name="Pearson D."/>
            <person name="Quail M.A."/>
            <person name="Rabbinowitsch E."/>
            <person name="Rutherford K.M."/>
            <person name="Rutter S."/>
            <person name="Saunders D."/>
            <person name="Seeger K."/>
            <person name="Sharp S."/>
            <person name="Skelton J."/>
            <person name="Simmonds M.N."/>
            <person name="Squares R."/>
            <person name="Squares S."/>
            <person name="Stevens K."/>
            <person name="Taylor K."/>
            <person name="Taylor R.G."/>
            <person name="Tivey A."/>
            <person name="Walsh S.V."/>
            <person name="Warren T."/>
            <person name="Whitehead S."/>
            <person name="Woodward J.R."/>
            <person name="Volckaert G."/>
            <person name="Aert R."/>
            <person name="Robben J."/>
            <person name="Grymonprez B."/>
            <person name="Weltjens I."/>
            <person name="Vanstreels E."/>
            <person name="Rieger M."/>
            <person name="Schaefer M."/>
            <person name="Mueller-Auer S."/>
            <person name="Gabel C."/>
            <person name="Fuchs M."/>
            <person name="Duesterhoeft A."/>
            <person name="Fritzc C."/>
            <person name="Holzer E."/>
            <person name="Moestl D."/>
            <person name="Hilbert H."/>
            <person name="Borzym K."/>
            <person name="Langer I."/>
            <person name="Beck A."/>
            <person name="Lehrach H."/>
            <person name="Reinhardt R."/>
            <person name="Pohl T.M."/>
            <person name="Eger P."/>
            <person name="Zimmermann W."/>
            <person name="Wedler H."/>
            <person name="Wambutt R."/>
            <person name="Purnelle B."/>
            <person name="Goffeau A."/>
            <person name="Cadieu E."/>
            <person name="Dreano S."/>
            <person name="Gloux S."/>
            <person name="Lelaure V."/>
            <person name="Mottier S."/>
            <person name="Galibert F."/>
            <person name="Aves S.J."/>
            <person name="Xiang Z."/>
            <person name="Hunt C."/>
            <person name="Moore K."/>
            <person name="Hurst S.M."/>
            <person name="Lucas M."/>
            <person name="Rochet M."/>
            <person name="Gaillardin C."/>
            <person name="Tallada V.A."/>
            <person name="Garzon A."/>
            <person name="Thode G."/>
            <person name="Daga R.R."/>
            <person name="Cruzado L."/>
            <person name="Jimenez J."/>
            <person name="Sanchez M."/>
            <person name="del Rey F."/>
            <person name="Benito J."/>
            <person name="Dominguez A."/>
            <person name="Revuelta J.L."/>
            <person name="Moreno S."/>
            <person name="Armstrong J."/>
            <person name="Forsburg S.L."/>
            <person name="Cerutti L."/>
            <person name="Lowe T."/>
            <person name="McCombie W.R."/>
            <person name="Paulsen I."/>
            <person name="Potashkin J."/>
            <person name="Shpakovski G.V."/>
            <person name="Ussery D."/>
            <person name="Barrell B.G."/>
            <person name="Nurse P."/>
        </authorList>
    </citation>
    <scope>NUCLEOTIDE SEQUENCE [LARGE SCALE GENOMIC DNA]</scope>
    <source>
        <strain>972 / ATCC 24843</strain>
    </source>
</reference>
<reference key="2">
    <citation type="journal article" date="2005" name="Eukaryot. Cell">
        <title>Systematic deletion analysis of fission yeast protein kinases.</title>
        <authorList>
            <person name="Bimbo A."/>
            <person name="Jia Y."/>
            <person name="Poh S.L."/>
            <person name="Karuturi R.K.M."/>
            <person name="den Elzen N."/>
            <person name="Peng X."/>
            <person name="Zheng L."/>
            <person name="O'Connell M."/>
            <person name="Liu E.T."/>
            <person name="Balasubramanian M.K."/>
            <person name="Liu J."/>
        </authorList>
    </citation>
    <scope>IDENTIFICATION</scope>
</reference>
<reference key="3">
    <citation type="journal article" date="2008" name="J. Proteome Res.">
        <title>Phosphoproteome analysis of fission yeast.</title>
        <authorList>
            <person name="Wilson-Grady J.T."/>
            <person name="Villen J."/>
            <person name="Gygi S.P."/>
        </authorList>
    </citation>
    <scope>PHOSPHORYLATION [LARGE SCALE ANALYSIS] AT SER-957 AND TYR-958</scope>
    <scope>IDENTIFICATION BY MASS SPECTROMETRY</scope>
</reference>
<reference key="4">
    <citation type="journal article" date="2020" name="Autophagy">
        <title>Atg38-Atg8 interaction in fission yeast establishes a positive feedback loop to promote autophagy.</title>
        <authorList>
            <person name="Yu Z.Q."/>
            <person name="Sun L.L."/>
            <person name="Jiang Z.D."/>
            <person name="Liu X.M."/>
            <person name="Zhao D."/>
            <person name="Wang H.T."/>
            <person name="He W.Z."/>
            <person name="Dong M.Q."/>
            <person name="Du L.L."/>
        </authorList>
    </citation>
    <scope>FUNCTION</scope>
    <scope>IDENTIFICATION IN THE AUTOPHAGY-SPECIFIC VPS34 PI3-KINASE COMPLEX I</scope>
</reference>
<sequence length="1706" mass="191094">MGIQLSTIQTPQFHELFEEELPEYHNERSLGDSHFLRTFRMQDRKGYDVLIKVFVNKLPEISLSSIVNLLKEEQENISYRVPNAVPYIKTLVTLRAAYLVRPYVTHNLYDRISTRPFLELTEKKWIMFQLLKGISDCHRLGVCHGDIKSENILITSWNWAYLSDFSSFKPTYLPEDNPADYGYFFDTSSRRVCNIAPERFVPASQLQPAPLSPAMDIFSLGCVFAELLLEESPLFTLSQLFSYKAHGSYDLQSVLEQIEDKSTQNMILSMLDRDPSQRLSADAYLQKYRGTVFPACFYDTLYDYCIGLVDPSGILSAKQPNDACSLYGSRIDDIYRDIMPPNNNDISNLMHTPHEYNGIDSYSVPLFTTLDEFYNKNPAAKNWYLRLYNTMQEKKGFEDKEQGSTPAPSPSVIEDISSIETDENHLYGAAVLLPIVLSTIRHVNTRESKINALSLVQILSRNICDESKLDTVLPFVMTLLRDQYADVRISALITITRLVSNVTSIAPINAFLFQEYLFPDLQHFLFDMNSRTRATYASCLPILAKQASKFLNLAQSLRNAGILSFPESEYENINHGKAELLFETGRHDLVVTVERHVSTLLADSSSIVRRSLLNALAPLCVFFGKAKSNDLILSHLITYLNDTDWMLRCAFFESITGLSIFIGPRSVDEYILPLMLQALVDPEPAVLESVLGSFSGLIELHLFEKLVVVDILQLVLPLVAVPNAYIRRAALSVIYSAYQSFDDIDRDCIVTPLLRPYLMSNLCDINSLEKLDQFILPMVSDSVWSTLTRWYEESENSSFWKCDKDASYSSLDVSNDSLLGRTKNLQKREIMHHAEVYTHKKISLTGHVIITSTEMLELSEDDQKWADIIKEMGVDVKHLWVLANLRDYVKKTKINLNGINYKRQSGLRELNTYPNAPLHILPETIFWNPERPPSSSIANETFLDRNSYAESIQTSRSYNDDLIARDPIAYVGTDMTNAFGTTTKPKDVSQSDIKVDINRESNSDNGETITGTHDVYRQTDNPEIKLPSDTASSKVDTHNPTVTQPTDDTGGLNSYNTENPLLTNNTLEPSSVEAIVSSKDSDKHAKESKGKSLAPLISSRVSTNDTTNVAGIRSQRSFTTHIDLKKLTTRQNGAKKSSYTGTNPCVLNYLNKIYAEAAASTLNVGAAVSPSWASNIPLRRRTKVSAKAANKIVQTHEWHPEGSRVAQIYLGSLLDGGTKKVLVSPDSSFFVTLGSDGVVRAWQLVESVRHISTMRCECRLSYGHTRRNGERNRFSVVNGCFLGNTYAFASVTQDGSVEVHRLDVNNQRHTLISAGRIPNLDFSDSVTSMEASTFHDGSIRLVVVTKWSRIVYLDVGMMRVLSSDQLPLQCGSATSVVVSEGCNWALIGTTKGWLLLWDLRFGTLSCSWHMPARIDQMHLLLDVTKKRSNVNEYTSGNNNSPVTKVPGSSSTSSSSTQPINSTIPINPLENHGMLNSFGSTTVSISFSVLTNLDNKEVNLEDAVPASHRSASGIVNFDVEKGKTEEVFLENWNSSLTSPIPVSVGIDAFNEKKKFDIDSGNDMGLRDLNTKFDSPWPCISSPIYRYRGPSAGSVEREPLFLIAASGSPHAFIWNPHNVSASSSVTNDSESSKLSLIHNKPPIYQKVSEQQNVRPKSSGVSRPLLFLQQQKNLPSENRLHPIVDMAFLYQPYAIVLIVDAFGSLELWT</sequence>